<protein>
    <recommendedName>
        <fullName evidence="1">Elongation factor Ts</fullName>
        <shortName evidence="1">EF-Ts</shortName>
    </recommendedName>
</protein>
<accession>Q0KA17</accession>
<comment type="function">
    <text evidence="1">Associates with the EF-Tu.GDP complex and induces the exchange of GDP to GTP. It remains bound to the aminoacyl-tRNA.EF-Tu.GTP complex up to the GTP hydrolysis stage on the ribosome.</text>
</comment>
<comment type="subcellular location">
    <subcellularLocation>
        <location evidence="1">Cytoplasm</location>
    </subcellularLocation>
</comment>
<comment type="similarity">
    <text evidence="1">Belongs to the EF-Ts family.</text>
</comment>
<evidence type="ECO:0000255" key="1">
    <source>
        <dbReference type="HAMAP-Rule" id="MF_00050"/>
    </source>
</evidence>
<gene>
    <name evidence="1" type="primary">tsf</name>
    <name type="ordered locus">H16_A2054</name>
</gene>
<dbReference type="EMBL" id="AM260479">
    <property type="protein sequence ID" value="CAJ93154.1"/>
    <property type="molecule type" value="Genomic_DNA"/>
</dbReference>
<dbReference type="RefSeq" id="WP_010809600.1">
    <property type="nucleotide sequence ID" value="NZ_CP039287.1"/>
</dbReference>
<dbReference type="SMR" id="Q0KA17"/>
<dbReference type="STRING" id="381666.H16_A2054"/>
<dbReference type="KEGG" id="reh:H16_A2054"/>
<dbReference type="eggNOG" id="COG0264">
    <property type="taxonomic scope" value="Bacteria"/>
</dbReference>
<dbReference type="HOGENOM" id="CLU_047155_0_2_4"/>
<dbReference type="OrthoDB" id="9808348at2"/>
<dbReference type="Proteomes" id="UP000008210">
    <property type="component" value="Chromosome 1"/>
</dbReference>
<dbReference type="GO" id="GO:0005737">
    <property type="term" value="C:cytoplasm"/>
    <property type="evidence" value="ECO:0007669"/>
    <property type="project" value="UniProtKB-SubCell"/>
</dbReference>
<dbReference type="GO" id="GO:0003746">
    <property type="term" value="F:translation elongation factor activity"/>
    <property type="evidence" value="ECO:0007669"/>
    <property type="project" value="UniProtKB-UniRule"/>
</dbReference>
<dbReference type="CDD" id="cd14275">
    <property type="entry name" value="UBA_EF-Ts"/>
    <property type="match status" value="1"/>
</dbReference>
<dbReference type="FunFam" id="1.10.286.20:FF:000001">
    <property type="entry name" value="Elongation factor Ts"/>
    <property type="match status" value="1"/>
</dbReference>
<dbReference type="FunFam" id="1.10.8.10:FF:000001">
    <property type="entry name" value="Elongation factor Ts"/>
    <property type="match status" value="1"/>
</dbReference>
<dbReference type="Gene3D" id="1.10.286.20">
    <property type="match status" value="1"/>
</dbReference>
<dbReference type="Gene3D" id="1.10.8.10">
    <property type="entry name" value="DNA helicase RuvA subunit, C-terminal domain"/>
    <property type="match status" value="1"/>
</dbReference>
<dbReference type="Gene3D" id="3.30.479.20">
    <property type="entry name" value="Elongation factor Ts, dimerisation domain"/>
    <property type="match status" value="2"/>
</dbReference>
<dbReference type="HAMAP" id="MF_00050">
    <property type="entry name" value="EF_Ts"/>
    <property type="match status" value="1"/>
</dbReference>
<dbReference type="InterPro" id="IPR036402">
    <property type="entry name" value="EF-Ts_dimer_sf"/>
</dbReference>
<dbReference type="InterPro" id="IPR001816">
    <property type="entry name" value="Transl_elong_EFTs/EF1B"/>
</dbReference>
<dbReference type="InterPro" id="IPR014039">
    <property type="entry name" value="Transl_elong_EFTs/EF1B_dimer"/>
</dbReference>
<dbReference type="InterPro" id="IPR018101">
    <property type="entry name" value="Transl_elong_Ts_CS"/>
</dbReference>
<dbReference type="InterPro" id="IPR009060">
    <property type="entry name" value="UBA-like_sf"/>
</dbReference>
<dbReference type="NCBIfam" id="TIGR00116">
    <property type="entry name" value="tsf"/>
    <property type="match status" value="1"/>
</dbReference>
<dbReference type="PANTHER" id="PTHR11741">
    <property type="entry name" value="ELONGATION FACTOR TS"/>
    <property type="match status" value="1"/>
</dbReference>
<dbReference type="PANTHER" id="PTHR11741:SF0">
    <property type="entry name" value="ELONGATION FACTOR TS, MITOCHONDRIAL"/>
    <property type="match status" value="1"/>
</dbReference>
<dbReference type="Pfam" id="PF00889">
    <property type="entry name" value="EF_TS"/>
    <property type="match status" value="1"/>
</dbReference>
<dbReference type="SUPFAM" id="SSF54713">
    <property type="entry name" value="Elongation factor Ts (EF-Ts), dimerisation domain"/>
    <property type="match status" value="2"/>
</dbReference>
<dbReference type="SUPFAM" id="SSF46934">
    <property type="entry name" value="UBA-like"/>
    <property type="match status" value="1"/>
</dbReference>
<dbReference type="PROSITE" id="PS01127">
    <property type="entry name" value="EF_TS_2"/>
    <property type="match status" value="1"/>
</dbReference>
<reference key="1">
    <citation type="journal article" date="2006" name="Nat. Biotechnol.">
        <title>Genome sequence of the bioplastic-producing 'Knallgas' bacterium Ralstonia eutropha H16.</title>
        <authorList>
            <person name="Pohlmann A."/>
            <person name="Fricke W.F."/>
            <person name="Reinecke F."/>
            <person name="Kusian B."/>
            <person name="Liesegang H."/>
            <person name="Cramm R."/>
            <person name="Eitinger T."/>
            <person name="Ewering C."/>
            <person name="Poetter M."/>
            <person name="Schwartz E."/>
            <person name="Strittmatter A."/>
            <person name="Voss I."/>
            <person name="Gottschalk G."/>
            <person name="Steinbuechel A."/>
            <person name="Friedrich B."/>
            <person name="Bowien B."/>
        </authorList>
    </citation>
    <scope>NUCLEOTIDE SEQUENCE [LARGE SCALE GENOMIC DNA]</scope>
    <source>
        <strain>ATCC 17699 / DSM 428 / KCTC 22496 / NCIMB 10442 / H16 / Stanier 337</strain>
    </source>
</reference>
<proteinExistence type="inferred from homology"/>
<keyword id="KW-0963">Cytoplasm</keyword>
<keyword id="KW-0251">Elongation factor</keyword>
<keyword id="KW-0648">Protein biosynthesis</keyword>
<keyword id="KW-1185">Reference proteome</keyword>
<organism>
    <name type="scientific">Cupriavidus necator (strain ATCC 17699 / DSM 428 / KCTC 22496 / NCIMB 10442 / H16 / Stanier 337)</name>
    <name type="common">Ralstonia eutropha</name>
    <dbReference type="NCBI Taxonomy" id="381666"/>
    <lineage>
        <taxon>Bacteria</taxon>
        <taxon>Pseudomonadati</taxon>
        <taxon>Pseudomonadota</taxon>
        <taxon>Betaproteobacteria</taxon>
        <taxon>Burkholderiales</taxon>
        <taxon>Burkholderiaceae</taxon>
        <taxon>Cupriavidus</taxon>
    </lineage>
</organism>
<feature type="chain" id="PRO_1000006157" description="Elongation factor Ts">
    <location>
        <begin position="1"/>
        <end position="292"/>
    </location>
</feature>
<feature type="region of interest" description="Involved in Mg(2+) ion dislocation from EF-Tu" evidence="1">
    <location>
        <begin position="80"/>
        <end position="83"/>
    </location>
</feature>
<sequence length="292" mass="30940">MAAITASMVAELRAKTDAPMMECKKALTEADGDLDKAEELLRVKLGNKASKAASRVTAEGVVASFIDGTTGVLVELNCETDFVSKNDDFLAFSAKVAELIAKQNPADVAALSALEIDGVSVEATRTALIGKIGENLTIRRFARYANGGKLVSYLHGTRIGVMVEFDGDEAAAKDVAMHVAAMKPVSLSAEQVPADLIAKERSIAEQKAAESGKPAEIVAKMVEGSVQKYLKEVSLFNQPFVKNDKQTVEQMLKAANTTVKGFTLFVVGEGIEKKQDDFAAEVAAQVAAAQKG</sequence>
<name>EFTS_CUPNH</name>